<dbReference type="EC" id="2.1.1.107" evidence="1"/>
<dbReference type="EC" id="1.3.1.76" evidence="1"/>
<dbReference type="EC" id="4.99.1.4" evidence="1"/>
<dbReference type="EMBL" id="CP000687">
    <property type="protein sequence ID" value="ABY70436.1"/>
    <property type="molecule type" value="Genomic_DNA"/>
</dbReference>
<dbReference type="RefSeq" id="WP_012263416.1">
    <property type="nucleotide sequence ID" value="NC_010278.1"/>
</dbReference>
<dbReference type="SMR" id="B0BTC2"/>
<dbReference type="KEGG" id="apj:APJL_1886"/>
<dbReference type="HOGENOM" id="CLU_011276_2_1_6"/>
<dbReference type="UniPathway" id="UPA00148">
    <property type="reaction ID" value="UER00211"/>
</dbReference>
<dbReference type="UniPathway" id="UPA00148">
    <property type="reaction ID" value="UER00222"/>
</dbReference>
<dbReference type="UniPathway" id="UPA00262">
    <property type="reaction ID" value="UER00211"/>
</dbReference>
<dbReference type="UniPathway" id="UPA00262">
    <property type="reaction ID" value="UER00222"/>
</dbReference>
<dbReference type="UniPathway" id="UPA00262">
    <property type="reaction ID" value="UER00376"/>
</dbReference>
<dbReference type="Proteomes" id="UP000008547">
    <property type="component" value="Chromosome"/>
</dbReference>
<dbReference type="GO" id="GO:0051287">
    <property type="term" value="F:NAD binding"/>
    <property type="evidence" value="ECO:0007669"/>
    <property type="project" value="InterPro"/>
</dbReference>
<dbReference type="GO" id="GO:0043115">
    <property type="term" value="F:precorrin-2 dehydrogenase activity"/>
    <property type="evidence" value="ECO:0007669"/>
    <property type="project" value="UniProtKB-UniRule"/>
</dbReference>
<dbReference type="GO" id="GO:0051266">
    <property type="term" value="F:sirohydrochlorin ferrochelatase activity"/>
    <property type="evidence" value="ECO:0007669"/>
    <property type="project" value="UniProtKB-EC"/>
</dbReference>
<dbReference type="GO" id="GO:0004851">
    <property type="term" value="F:uroporphyrin-III C-methyltransferase activity"/>
    <property type="evidence" value="ECO:0007669"/>
    <property type="project" value="UniProtKB-UniRule"/>
</dbReference>
<dbReference type="GO" id="GO:0009236">
    <property type="term" value="P:cobalamin biosynthetic process"/>
    <property type="evidence" value="ECO:0007669"/>
    <property type="project" value="UniProtKB-UniRule"/>
</dbReference>
<dbReference type="GO" id="GO:0032259">
    <property type="term" value="P:methylation"/>
    <property type="evidence" value="ECO:0007669"/>
    <property type="project" value="UniProtKB-KW"/>
</dbReference>
<dbReference type="GO" id="GO:0019354">
    <property type="term" value="P:siroheme biosynthetic process"/>
    <property type="evidence" value="ECO:0007669"/>
    <property type="project" value="UniProtKB-UniRule"/>
</dbReference>
<dbReference type="CDD" id="cd11642">
    <property type="entry name" value="SUMT"/>
    <property type="match status" value="1"/>
</dbReference>
<dbReference type="FunFam" id="3.30.160.110:FF:000001">
    <property type="entry name" value="Siroheme synthase"/>
    <property type="match status" value="1"/>
</dbReference>
<dbReference type="FunFam" id="3.30.950.10:FF:000001">
    <property type="entry name" value="Siroheme synthase"/>
    <property type="match status" value="1"/>
</dbReference>
<dbReference type="FunFam" id="3.40.1010.10:FF:000001">
    <property type="entry name" value="Siroheme synthase"/>
    <property type="match status" value="1"/>
</dbReference>
<dbReference type="Gene3D" id="3.40.1010.10">
    <property type="entry name" value="Cobalt-precorrin-4 Transmethylase, Domain 1"/>
    <property type="match status" value="1"/>
</dbReference>
<dbReference type="Gene3D" id="3.30.950.10">
    <property type="entry name" value="Methyltransferase, Cobalt-precorrin-4 Transmethylase, Domain 2"/>
    <property type="match status" value="1"/>
</dbReference>
<dbReference type="Gene3D" id="3.40.50.720">
    <property type="entry name" value="NAD(P)-binding Rossmann-like Domain"/>
    <property type="match status" value="1"/>
</dbReference>
<dbReference type="Gene3D" id="1.10.8.210">
    <property type="entry name" value="Sirohaem synthase, dimerisation domain"/>
    <property type="match status" value="1"/>
</dbReference>
<dbReference type="Gene3D" id="3.30.160.110">
    <property type="entry name" value="Siroheme synthase, domain 2"/>
    <property type="match status" value="1"/>
</dbReference>
<dbReference type="HAMAP" id="MF_01646">
    <property type="entry name" value="Siroheme_synth"/>
    <property type="match status" value="1"/>
</dbReference>
<dbReference type="InterPro" id="IPR000878">
    <property type="entry name" value="4pyrrol_Mease"/>
</dbReference>
<dbReference type="InterPro" id="IPR035996">
    <property type="entry name" value="4pyrrol_Methylase_sf"/>
</dbReference>
<dbReference type="InterPro" id="IPR014777">
    <property type="entry name" value="4pyrrole_Mease_sub1"/>
</dbReference>
<dbReference type="InterPro" id="IPR014776">
    <property type="entry name" value="4pyrrole_Mease_sub2"/>
</dbReference>
<dbReference type="InterPro" id="IPR006366">
    <property type="entry name" value="CobA/CysG_C"/>
</dbReference>
<dbReference type="InterPro" id="IPR036291">
    <property type="entry name" value="NAD(P)-bd_dom_sf"/>
</dbReference>
<dbReference type="InterPro" id="IPR050161">
    <property type="entry name" value="Siro_Cobalamin_biosynth"/>
</dbReference>
<dbReference type="InterPro" id="IPR037115">
    <property type="entry name" value="Sirohaem_synt_dimer_dom_sf"/>
</dbReference>
<dbReference type="InterPro" id="IPR012409">
    <property type="entry name" value="Sirohaem_synth"/>
</dbReference>
<dbReference type="InterPro" id="IPR028281">
    <property type="entry name" value="Sirohaem_synthase_central"/>
</dbReference>
<dbReference type="InterPro" id="IPR019478">
    <property type="entry name" value="Sirohaem_synthase_dimer_dom"/>
</dbReference>
<dbReference type="InterPro" id="IPR006367">
    <property type="entry name" value="Sirohaem_synthase_N"/>
</dbReference>
<dbReference type="InterPro" id="IPR003043">
    <property type="entry name" value="Uropor_MeTrfase_CS"/>
</dbReference>
<dbReference type="NCBIfam" id="TIGR01469">
    <property type="entry name" value="cobA_cysG_Cterm"/>
    <property type="match status" value="1"/>
</dbReference>
<dbReference type="NCBIfam" id="TIGR01470">
    <property type="entry name" value="cysG_Nterm"/>
    <property type="match status" value="1"/>
</dbReference>
<dbReference type="NCBIfam" id="NF004790">
    <property type="entry name" value="PRK06136.1"/>
    <property type="match status" value="1"/>
</dbReference>
<dbReference type="NCBIfam" id="NF007922">
    <property type="entry name" value="PRK10637.1"/>
    <property type="match status" value="1"/>
</dbReference>
<dbReference type="PANTHER" id="PTHR45790:SF1">
    <property type="entry name" value="SIROHEME SYNTHASE"/>
    <property type="match status" value="1"/>
</dbReference>
<dbReference type="PANTHER" id="PTHR45790">
    <property type="entry name" value="SIROHEME SYNTHASE-RELATED"/>
    <property type="match status" value="1"/>
</dbReference>
<dbReference type="Pfam" id="PF10414">
    <property type="entry name" value="CysG_dimeriser"/>
    <property type="match status" value="1"/>
</dbReference>
<dbReference type="Pfam" id="PF13241">
    <property type="entry name" value="NAD_binding_7"/>
    <property type="match status" value="1"/>
</dbReference>
<dbReference type="Pfam" id="PF14824">
    <property type="entry name" value="Sirohm_synth_M"/>
    <property type="match status" value="1"/>
</dbReference>
<dbReference type="Pfam" id="PF00590">
    <property type="entry name" value="TP_methylase"/>
    <property type="match status" value="1"/>
</dbReference>
<dbReference type="PIRSF" id="PIRSF036426">
    <property type="entry name" value="Sirohaem_synth"/>
    <property type="match status" value="1"/>
</dbReference>
<dbReference type="SUPFAM" id="SSF51735">
    <property type="entry name" value="NAD(P)-binding Rossmann-fold domains"/>
    <property type="match status" value="1"/>
</dbReference>
<dbReference type="SUPFAM" id="SSF75615">
    <property type="entry name" value="Siroheme synthase middle domains-like"/>
    <property type="match status" value="1"/>
</dbReference>
<dbReference type="SUPFAM" id="SSF53790">
    <property type="entry name" value="Tetrapyrrole methylase"/>
    <property type="match status" value="1"/>
</dbReference>
<dbReference type="PROSITE" id="PS00839">
    <property type="entry name" value="SUMT_1"/>
    <property type="match status" value="1"/>
</dbReference>
<dbReference type="PROSITE" id="PS00840">
    <property type="entry name" value="SUMT_2"/>
    <property type="match status" value="1"/>
</dbReference>
<feature type="chain" id="PRO_1000186934" description="Siroheme synthase">
    <location>
        <begin position="1"/>
        <end position="486"/>
    </location>
</feature>
<feature type="region of interest" description="Precorrin-2 dehydrogenase /sirohydrochlorin ferrochelatase" evidence="1">
    <location>
        <begin position="1"/>
        <end position="204"/>
    </location>
</feature>
<feature type="region of interest" description="Uroporphyrinogen-III C-methyltransferase" evidence="1">
    <location>
        <begin position="216"/>
        <end position="486"/>
    </location>
</feature>
<feature type="active site" description="Proton acceptor" evidence="1">
    <location>
        <position position="248"/>
    </location>
</feature>
<feature type="active site" description="Proton donor" evidence="1">
    <location>
        <position position="270"/>
    </location>
</feature>
<feature type="binding site" evidence="1">
    <location>
        <begin position="22"/>
        <end position="23"/>
    </location>
    <ligand>
        <name>NAD(+)</name>
        <dbReference type="ChEBI" id="CHEBI:57540"/>
    </ligand>
</feature>
<feature type="binding site" evidence="1">
    <location>
        <begin position="43"/>
        <end position="44"/>
    </location>
    <ligand>
        <name>NAD(+)</name>
        <dbReference type="ChEBI" id="CHEBI:57540"/>
    </ligand>
</feature>
<feature type="binding site" evidence="1">
    <location>
        <position position="225"/>
    </location>
    <ligand>
        <name>S-adenosyl-L-methionine</name>
        <dbReference type="ChEBI" id="CHEBI:59789"/>
    </ligand>
</feature>
<feature type="binding site" evidence="1">
    <location>
        <begin position="301"/>
        <end position="303"/>
    </location>
    <ligand>
        <name>S-adenosyl-L-methionine</name>
        <dbReference type="ChEBI" id="CHEBI:59789"/>
    </ligand>
</feature>
<feature type="binding site" evidence="1">
    <location>
        <position position="306"/>
    </location>
    <ligand>
        <name>S-adenosyl-L-methionine</name>
        <dbReference type="ChEBI" id="CHEBI:59789"/>
    </ligand>
</feature>
<feature type="binding site" evidence="1">
    <location>
        <begin position="331"/>
        <end position="332"/>
    </location>
    <ligand>
        <name>S-adenosyl-L-methionine</name>
        <dbReference type="ChEBI" id="CHEBI:59789"/>
    </ligand>
</feature>
<feature type="binding site" evidence="1">
    <location>
        <position position="383"/>
    </location>
    <ligand>
        <name>S-adenosyl-L-methionine</name>
        <dbReference type="ChEBI" id="CHEBI:59789"/>
    </ligand>
</feature>
<feature type="binding site" evidence="1">
    <location>
        <position position="412"/>
    </location>
    <ligand>
        <name>S-adenosyl-L-methionine</name>
        <dbReference type="ChEBI" id="CHEBI:59789"/>
    </ligand>
</feature>
<feature type="modified residue" description="Phosphoserine" evidence="1">
    <location>
        <position position="128"/>
    </location>
</feature>
<evidence type="ECO:0000255" key="1">
    <source>
        <dbReference type="HAMAP-Rule" id="MF_01646"/>
    </source>
</evidence>
<organism>
    <name type="scientific">Actinobacillus pleuropneumoniae serotype 3 (strain JL03)</name>
    <dbReference type="NCBI Taxonomy" id="434271"/>
    <lineage>
        <taxon>Bacteria</taxon>
        <taxon>Pseudomonadati</taxon>
        <taxon>Pseudomonadota</taxon>
        <taxon>Gammaproteobacteria</taxon>
        <taxon>Pasteurellales</taxon>
        <taxon>Pasteurellaceae</taxon>
        <taxon>Actinobacillus</taxon>
    </lineage>
</organism>
<reference key="1">
    <citation type="journal article" date="2008" name="PLoS ONE">
        <title>Genome biology of Actinobacillus pleuropneumoniae JL03, an isolate of serotype 3 prevalent in China.</title>
        <authorList>
            <person name="Xu Z."/>
            <person name="Zhou Y."/>
            <person name="Li L."/>
            <person name="Zhou R."/>
            <person name="Xiao S."/>
            <person name="Wan Y."/>
            <person name="Zhang S."/>
            <person name="Wang K."/>
            <person name="Li W."/>
            <person name="Li L."/>
            <person name="Jin H."/>
            <person name="Kang M."/>
            <person name="Dalai B."/>
            <person name="Li T."/>
            <person name="Liu L."/>
            <person name="Cheng Y."/>
            <person name="Zhang L."/>
            <person name="Xu T."/>
            <person name="Zheng H."/>
            <person name="Pu S."/>
            <person name="Wang B."/>
            <person name="Gu W."/>
            <person name="Zhang X.L."/>
            <person name="Zhu G.-F."/>
            <person name="Wang S."/>
            <person name="Zhao G.-P."/>
            <person name="Chen H."/>
        </authorList>
    </citation>
    <scope>NUCLEOTIDE SEQUENCE [LARGE SCALE GENOMIC DNA]</scope>
    <source>
        <strain>JL03</strain>
    </source>
</reference>
<protein>
    <recommendedName>
        <fullName evidence="1">Siroheme synthase</fullName>
    </recommendedName>
    <domain>
        <recommendedName>
            <fullName evidence="1">Uroporphyrinogen-III C-methyltransferase</fullName>
            <shortName evidence="1">Urogen III methylase</shortName>
            <ecNumber evidence="1">2.1.1.107</ecNumber>
        </recommendedName>
        <alternativeName>
            <fullName evidence="1">SUMT</fullName>
        </alternativeName>
        <alternativeName>
            <fullName evidence="1">Uroporphyrinogen III methylase</fullName>
            <shortName evidence="1">UROM</shortName>
        </alternativeName>
    </domain>
    <domain>
        <recommendedName>
            <fullName evidence="1">Precorrin-2 dehydrogenase</fullName>
            <ecNumber evidence="1">1.3.1.76</ecNumber>
        </recommendedName>
    </domain>
    <domain>
        <recommendedName>
            <fullName evidence="1">Sirohydrochlorin ferrochelatase</fullName>
            <ecNumber evidence="1">4.99.1.4</ecNumber>
        </recommendedName>
    </domain>
</protein>
<proteinExistence type="inferred from homology"/>
<accession>B0BTC2</accession>
<sequence length="486" mass="53152">MNYLPIFVDLKNRPVLVVGGGHIAVRKIDALLKAGASVKVVAEKLHSSLQSLTDEGKVEWIAKTFEANQVTNSYLVIAATDDNALNQLVFETAESQQRLVNVVDDQPRCSYIFPSIIDRSPVQIAISSGGAAPVLIRLLREKLEALIPPNLGAMADIATRWRSAVKTQFPQLTQRRRFWEKLFTHQSFQRLTENHQIEQAEALVEAELHNNNPVLGEVSLVGAGPGDAGLLTLKGLQTIQQADVVLYDALVSEAVLELVRRDADKVFVGKLAGKHSVKQEDTNQLLVKYAKQGKRVVRLKGGDPFVFGRGGEELEILKAENIPFSIVPGITAALGATAYAGIPLTHRDHAQTAMFITGHLKPDGNRLKWETLAQGNQTLVVYMGTIKAAELSAELQKHGKPSDTPVAIISNGTLPNQQVQTGVLSELAELAEKAPTPALIVIGEVVKLQKDLAWFGKEAVQFVSTQETLWQKPTLQNKETHWKQAA</sequence>
<comment type="function">
    <text evidence="1">Multifunctional enzyme that catalyzes the SAM-dependent methylations of uroporphyrinogen III at position C-2 and C-7 to form precorrin-2 via precorrin-1. Then it catalyzes the NAD-dependent ring dehydrogenation of precorrin-2 to yield sirohydrochlorin. Finally, it catalyzes the ferrochelation of sirohydrochlorin to yield siroheme.</text>
</comment>
<comment type="catalytic activity">
    <reaction evidence="1">
        <text>uroporphyrinogen III + 2 S-adenosyl-L-methionine = precorrin-2 + 2 S-adenosyl-L-homocysteine + H(+)</text>
        <dbReference type="Rhea" id="RHEA:32459"/>
        <dbReference type="ChEBI" id="CHEBI:15378"/>
        <dbReference type="ChEBI" id="CHEBI:57308"/>
        <dbReference type="ChEBI" id="CHEBI:57856"/>
        <dbReference type="ChEBI" id="CHEBI:58827"/>
        <dbReference type="ChEBI" id="CHEBI:59789"/>
        <dbReference type="EC" id="2.1.1.107"/>
    </reaction>
</comment>
<comment type="catalytic activity">
    <reaction evidence="1">
        <text>precorrin-2 + NAD(+) = sirohydrochlorin + NADH + 2 H(+)</text>
        <dbReference type="Rhea" id="RHEA:15613"/>
        <dbReference type="ChEBI" id="CHEBI:15378"/>
        <dbReference type="ChEBI" id="CHEBI:57540"/>
        <dbReference type="ChEBI" id="CHEBI:57945"/>
        <dbReference type="ChEBI" id="CHEBI:58351"/>
        <dbReference type="ChEBI" id="CHEBI:58827"/>
        <dbReference type="EC" id="1.3.1.76"/>
    </reaction>
</comment>
<comment type="catalytic activity">
    <reaction evidence="1">
        <text>siroheme + 2 H(+) = sirohydrochlorin + Fe(2+)</text>
        <dbReference type="Rhea" id="RHEA:24360"/>
        <dbReference type="ChEBI" id="CHEBI:15378"/>
        <dbReference type="ChEBI" id="CHEBI:29033"/>
        <dbReference type="ChEBI" id="CHEBI:58351"/>
        <dbReference type="ChEBI" id="CHEBI:60052"/>
        <dbReference type="EC" id="4.99.1.4"/>
    </reaction>
</comment>
<comment type="pathway">
    <text evidence="1">Cofactor biosynthesis; adenosylcobalamin biosynthesis; precorrin-2 from uroporphyrinogen III: step 1/1.</text>
</comment>
<comment type="pathway">
    <text evidence="1">Cofactor biosynthesis; adenosylcobalamin biosynthesis; sirohydrochlorin from precorrin-2: step 1/1.</text>
</comment>
<comment type="pathway">
    <text evidence="1">Porphyrin-containing compound metabolism; siroheme biosynthesis; precorrin-2 from uroporphyrinogen III: step 1/1.</text>
</comment>
<comment type="pathway">
    <text evidence="1">Porphyrin-containing compound metabolism; siroheme biosynthesis; siroheme from sirohydrochlorin: step 1/1.</text>
</comment>
<comment type="pathway">
    <text evidence="1">Porphyrin-containing compound metabolism; siroheme biosynthesis; sirohydrochlorin from precorrin-2: step 1/1.</text>
</comment>
<comment type="similarity">
    <text evidence="1">In the N-terminal section; belongs to the precorrin-2 dehydrogenase / sirohydrochlorin ferrochelatase family.</text>
</comment>
<comment type="similarity">
    <text evidence="1">In the C-terminal section; belongs to the precorrin methyltransferase family.</text>
</comment>
<name>CYSG_ACTPJ</name>
<gene>
    <name evidence="1" type="primary">cysG</name>
    <name type="ordered locus">APJL_1886</name>
</gene>
<keyword id="KW-0169">Cobalamin biosynthesis</keyword>
<keyword id="KW-0456">Lyase</keyword>
<keyword id="KW-0489">Methyltransferase</keyword>
<keyword id="KW-0511">Multifunctional enzyme</keyword>
<keyword id="KW-0520">NAD</keyword>
<keyword id="KW-0560">Oxidoreductase</keyword>
<keyword id="KW-0597">Phosphoprotein</keyword>
<keyword id="KW-0627">Porphyrin biosynthesis</keyword>
<keyword id="KW-0949">S-adenosyl-L-methionine</keyword>
<keyword id="KW-0808">Transferase</keyword>